<keyword id="KW-0067">ATP-binding</keyword>
<keyword id="KW-0256">Endoplasmic reticulum</keyword>
<keyword id="KW-0325">Glycoprotein</keyword>
<keyword id="KW-0547">Nucleotide-binding</keyword>
<keyword id="KW-1185">Reference proteome</keyword>
<keyword id="KW-0732">Signal</keyword>
<comment type="subunit">
    <text evidence="1">Homohexamer.</text>
</comment>
<comment type="subcellular location">
    <subcellularLocation>
        <location evidence="1">Endoplasmic reticulum lumen</location>
    </subcellularLocation>
</comment>
<comment type="similarity">
    <text evidence="3">Belongs to the ClpA/ClpB family. Torsin subfamily.</text>
</comment>
<name>TOR2A_XENLA</name>
<protein>
    <recommendedName>
        <fullName>Torsin-2A</fullName>
    </recommendedName>
    <alternativeName>
        <fullName>Torsin family 2 member A</fullName>
    </alternativeName>
</protein>
<evidence type="ECO:0000250" key="1"/>
<evidence type="ECO:0000255" key="2"/>
<evidence type="ECO:0000305" key="3"/>
<accession>Q68F68</accession>
<reference key="1">
    <citation type="submission" date="2004-08" db="EMBL/GenBank/DDBJ databases">
        <authorList>
            <consortium name="NIH - Xenopus Gene Collection (XGC) project"/>
        </authorList>
    </citation>
    <scope>NUCLEOTIDE SEQUENCE [LARGE SCALE MRNA]</scope>
    <source>
        <tissue>Spleen</tissue>
    </source>
</reference>
<dbReference type="EMBL" id="BC079976">
    <property type="protein sequence ID" value="AAH79976.1"/>
    <property type="molecule type" value="mRNA"/>
</dbReference>
<dbReference type="RefSeq" id="NP_001087470.1">
    <property type="nucleotide sequence ID" value="NM_001094001.1"/>
</dbReference>
<dbReference type="SMR" id="Q68F68"/>
<dbReference type="GlyCosmos" id="Q68F68">
    <property type="glycosylation" value="2 sites, No reported glycans"/>
</dbReference>
<dbReference type="DNASU" id="447294"/>
<dbReference type="GeneID" id="447294"/>
<dbReference type="KEGG" id="xla:447294"/>
<dbReference type="AGR" id="Xenbase:XB-GENE-6254129"/>
<dbReference type="CTD" id="447294"/>
<dbReference type="Xenbase" id="XB-GENE-6254129">
    <property type="gene designation" value="tor2a.L"/>
</dbReference>
<dbReference type="OrthoDB" id="19623at2759"/>
<dbReference type="Proteomes" id="UP000186698">
    <property type="component" value="Chromosome 2L"/>
</dbReference>
<dbReference type="Bgee" id="447294">
    <property type="expression patterns" value="Expressed in egg cell and 19 other cell types or tissues"/>
</dbReference>
<dbReference type="GO" id="GO:0005788">
    <property type="term" value="C:endoplasmic reticulum lumen"/>
    <property type="evidence" value="ECO:0000318"/>
    <property type="project" value="GO_Central"/>
</dbReference>
<dbReference type="GO" id="GO:0005635">
    <property type="term" value="C:nuclear envelope"/>
    <property type="evidence" value="ECO:0000318"/>
    <property type="project" value="GO_Central"/>
</dbReference>
<dbReference type="GO" id="GO:0005524">
    <property type="term" value="F:ATP binding"/>
    <property type="evidence" value="ECO:0007669"/>
    <property type="project" value="UniProtKB-KW"/>
</dbReference>
<dbReference type="GO" id="GO:0016887">
    <property type="term" value="F:ATP hydrolysis activity"/>
    <property type="evidence" value="ECO:0007669"/>
    <property type="project" value="InterPro"/>
</dbReference>
<dbReference type="GO" id="GO:0051085">
    <property type="term" value="P:chaperone cofactor-dependent protein refolding"/>
    <property type="evidence" value="ECO:0007669"/>
    <property type="project" value="InterPro"/>
</dbReference>
<dbReference type="FunFam" id="3.40.50.300:FF:002276">
    <property type="entry name" value="Torsin, putative"/>
    <property type="match status" value="1"/>
</dbReference>
<dbReference type="Gene3D" id="3.40.50.300">
    <property type="entry name" value="P-loop containing nucleotide triphosphate hydrolases"/>
    <property type="match status" value="1"/>
</dbReference>
<dbReference type="InterPro" id="IPR027417">
    <property type="entry name" value="P-loop_NTPase"/>
</dbReference>
<dbReference type="InterPro" id="IPR049337">
    <property type="entry name" value="TOR1A_C"/>
</dbReference>
<dbReference type="InterPro" id="IPR010448">
    <property type="entry name" value="Torsin"/>
</dbReference>
<dbReference type="InterPro" id="IPR017378">
    <property type="entry name" value="Torsin_1/2"/>
</dbReference>
<dbReference type="PANTHER" id="PTHR10760">
    <property type="entry name" value="TORSIN"/>
    <property type="match status" value="1"/>
</dbReference>
<dbReference type="PANTHER" id="PTHR10760:SF4">
    <property type="entry name" value="TORSIN-2A"/>
    <property type="match status" value="1"/>
</dbReference>
<dbReference type="Pfam" id="PF21376">
    <property type="entry name" value="TOR1A_C"/>
    <property type="match status" value="1"/>
</dbReference>
<dbReference type="Pfam" id="PF06309">
    <property type="entry name" value="Torsin"/>
    <property type="match status" value="1"/>
</dbReference>
<dbReference type="PIRSF" id="PIRSF038079">
    <property type="entry name" value="Torsin_2A"/>
    <property type="match status" value="1"/>
</dbReference>
<dbReference type="SUPFAM" id="SSF52540">
    <property type="entry name" value="P-loop containing nucleoside triphosphate hydrolases"/>
    <property type="match status" value="1"/>
</dbReference>
<gene>
    <name type="primary">tor2a</name>
</gene>
<sequence length="314" mass="35945">MAVRWWIIPMLLLVPGSSGAWEVLSLPFSLYNFYECGFKVDIEALDCDLARNVFGQHLAQELLFKSVKEFIESDNPSKPLVLSLHGWSGTGKTFVSSLLVKHLFKEGSQSRFVHFFSPVLHFPRVQNLEQYKVDLKGWIQGNLTACGRSLFVFEEMDKMHPGLIDAIVPFLGTSWVVYGSNYRKAIFLFISNAGGDDINEVALDFWRQRKDREDIRLHHLESAISKAVFSNPKHGFWQSQIINQHLIDVIVPFLPLRPSHVRQCVRTEMVQQGLEPEEVLVNNITDSFVYFPEDEKVFSSTGCKTVASRINYFV</sequence>
<proteinExistence type="evidence at transcript level"/>
<feature type="signal peptide" evidence="2">
    <location>
        <begin position="1"/>
        <end position="19"/>
    </location>
</feature>
<feature type="chain" id="PRO_0000228832" description="Torsin-2A">
    <location>
        <begin position="20"/>
        <end position="314"/>
    </location>
</feature>
<feature type="binding site" evidence="2">
    <location>
        <begin position="86"/>
        <end position="93"/>
    </location>
    <ligand>
        <name>ATP</name>
        <dbReference type="ChEBI" id="CHEBI:30616"/>
    </ligand>
</feature>
<feature type="glycosylation site" description="N-linked (GlcNAc...) asparagine" evidence="2">
    <location>
        <position position="142"/>
    </location>
</feature>
<feature type="glycosylation site" description="N-linked (GlcNAc...) asparagine" evidence="2">
    <location>
        <position position="283"/>
    </location>
</feature>
<organism>
    <name type="scientific">Xenopus laevis</name>
    <name type="common">African clawed frog</name>
    <dbReference type="NCBI Taxonomy" id="8355"/>
    <lineage>
        <taxon>Eukaryota</taxon>
        <taxon>Metazoa</taxon>
        <taxon>Chordata</taxon>
        <taxon>Craniata</taxon>
        <taxon>Vertebrata</taxon>
        <taxon>Euteleostomi</taxon>
        <taxon>Amphibia</taxon>
        <taxon>Batrachia</taxon>
        <taxon>Anura</taxon>
        <taxon>Pipoidea</taxon>
        <taxon>Pipidae</taxon>
        <taxon>Xenopodinae</taxon>
        <taxon>Xenopus</taxon>
        <taxon>Xenopus</taxon>
    </lineage>
</organism>